<protein>
    <recommendedName>
        <fullName>Probable proteasome inhibitor</fullName>
    </recommendedName>
</protein>
<gene>
    <name type="ordered locus">At3g53970</name>
    <name type="ORF">F5K20_270</name>
</gene>
<proteinExistence type="evidence at protein level"/>
<evidence type="ECO:0000250" key="1"/>
<evidence type="ECO:0000256" key="2">
    <source>
        <dbReference type="SAM" id="MobiDB-lite"/>
    </source>
</evidence>
<evidence type="ECO:0000305" key="3"/>
<evidence type="ECO:0007744" key="4">
    <source>
    </source>
</evidence>
<accession>Q9M330</accession>
<organism>
    <name type="scientific">Arabidopsis thaliana</name>
    <name type="common">Mouse-ear cress</name>
    <dbReference type="NCBI Taxonomy" id="3702"/>
    <lineage>
        <taxon>Eukaryota</taxon>
        <taxon>Viridiplantae</taxon>
        <taxon>Streptophyta</taxon>
        <taxon>Embryophyta</taxon>
        <taxon>Tracheophyta</taxon>
        <taxon>Spermatophyta</taxon>
        <taxon>Magnoliopsida</taxon>
        <taxon>eudicotyledons</taxon>
        <taxon>Gunneridae</taxon>
        <taxon>Pentapetalae</taxon>
        <taxon>rosids</taxon>
        <taxon>malvids</taxon>
        <taxon>Brassicales</taxon>
        <taxon>Brassicaceae</taxon>
        <taxon>Camelineae</taxon>
        <taxon>Arabidopsis</taxon>
    </lineage>
</organism>
<keyword id="KW-0007">Acetylation</keyword>
<keyword id="KW-0025">Alternative splicing</keyword>
<keyword id="KW-0647">Proteasome</keyword>
<keyword id="KW-1185">Reference proteome</keyword>
<sequence>MANSQTVMAMIRLARPPFRNNHDKVAFAIHSSFVASGYILTATGRPAFADEALSSSSQNDVGIEGWNEFEGEYAFVYANPKKGSKKILVKCLAMDDKLLVDAIADGGAEPAHLEIKVGDYAEESNEGDYSAQFKNLDKLVTDLQSEIIDKLDGKPKPVASRAQSSSETNEEPRYYDDTPNPLGPQIHPSGVVVPPIPGNGGYSDLFPGPGAGMYPGRGGFGDGSMLVGPTDPRFFPFGDGSDRPGFMGPPHPGMPPPGARFDPYGPPGVPGFEPGRFTRQPPRGPGGGHPDLEHFPGGSDFI</sequence>
<comment type="function">
    <text evidence="1">Could play an important role in control of proteasome function. Inhibits the hydrolysis of protein and peptide substrates by the 20S proteasome (By similarity).</text>
</comment>
<comment type="alternative products">
    <event type="alternative splicing"/>
    <isoform>
        <id>Q9M330-1</id>
        <name>1</name>
        <sequence type="displayed"/>
    </isoform>
    <text>A number of isoforms are produced. According to EST sequences.</text>
</comment>
<comment type="similarity">
    <text evidence="3">Belongs to the proteasome inhibitor PI31 family.</text>
</comment>
<feature type="initiator methionine" description="Removed" evidence="4">
    <location>
        <position position="1"/>
    </location>
</feature>
<feature type="chain" id="PRO_0000220925" description="Probable proteasome inhibitor">
    <location>
        <begin position="2"/>
        <end position="302"/>
    </location>
</feature>
<feature type="region of interest" description="Disordered" evidence="2">
    <location>
        <begin position="151"/>
        <end position="188"/>
    </location>
</feature>
<feature type="region of interest" description="Disordered" evidence="2">
    <location>
        <begin position="259"/>
        <end position="302"/>
    </location>
</feature>
<feature type="compositionally biased region" description="Pro residues" evidence="2">
    <location>
        <begin position="259"/>
        <end position="269"/>
    </location>
</feature>
<feature type="modified residue" description="N-acetylalanine" evidence="4">
    <location>
        <position position="2"/>
    </location>
</feature>
<dbReference type="EMBL" id="AL132960">
    <property type="protein sequence ID" value="CAB88359.1"/>
    <property type="molecule type" value="Genomic_DNA"/>
</dbReference>
<dbReference type="EMBL" id="CP002686">
    <property type="protein sequence ID" value="AEE79166.1"/>
    <property type="molecule type" value="Genomic_DNA"/>
</dbReference>
<dbReference type="EMBL" id="AY063998">
    <property type="protein sequence ID" value="AAL36354.1"/>
    <property type="molecule type" value="mRNA"/>
</dbReference>
<dbReference type="EMBL" id="AY117182">
    <property type="protein sequence ID" value="AAM51257.1"/>
    <property type="molecule type" value="mRNA"/>
</dbReference>
<dbReference type="PIR" id="T45937">
    <property type="entry name" value="T45937"/>
</dbReference>
<dbReference type="RefSeq" id="NP_190965.1">
    <molecule id="Q9M330-1"/>
    <property type="nucleotide sequence ID" value="NM_115257.6"/>
</dbReference>
<dbReference type="SMR" id="Q9M330"/>
<dbReference type="FunCoup" id="Q9M330">
    <property type="interactions" value="3656"/>
</dbReference>
<dbReference type="IntAct" id="Q9M330">
    <property type="interactions" value="1"/>
</dbReference>
<dbReference type="STRING" id="3702.Q9M330"/>
<dbReference type="GlyGen" id="Q9M330">
    <property type="glycosylation" value="1 site"/>
</dbReference>
<dbReference type="iPTMnet" id="Q9M330"/>
<dbReference type="PaxDb" id="3702-AT3G53970.1"/>
<dbReference type="ProteomicsDB" id="248903">
    <molecule id="Q9M330-1"/>
</dbReference>
<dbReference type="EnsemblPlants" id="AT3G53970.1">
    <molecule id="Q9M330-1"/>
    <property type="protein sequence ID" value="AT3G53970.1"/>
    <property type="gene ID" value="AT3G53970"/>
</dbReference>
<dbReference type="GeneID" id="824564"/>
<dbReference type="Gramene" id="AT3G53970.1">
    <molecule id="Q9M330-1"/>
    <property type="protein sequence ID" value="AT3G53970.1"/>
    <property type="gene ID" value="AT3G53970"/>
</dbReference>
<dbReference type="KEGG" id="ath:AT3G53970"/>
<dbReference type="Araport" id="AT3G53970"/>
<dbReference type="TAIR" id="AT3G53970">
    <property type="gene designation" value="PTRE1"/>
</dbReference>
<dbReference type="eggNOG" id="KOG4761">
    <property type="taxonomic scope" value="Eukaryota"/>
</dbReference>
<dbReference type="HOGENOM" id="CLU_079501_0_0_1"/>
<dbReference type="InParanoid" id="Q9M330"/>
<dbReference type="OMA" id="PFGFPDI"/>
<dbReference type="PhylomeDB" id="Q9M330"/>
<dbReference type="CD-CODE" id="4299E36E">
    <property type="entry name" value="Nucleolus"/>
</dbReference>
<dbReference type="PRO" id="PR:Q9M330"/>
<dbReference type="Proteomes" id="UP000006548">
    <property type="component" value="Chromosome 3"/>
</dbReference>
<dbReference type="ExpressionAtlas" id="Q9M330">
    <property type="expression patterns" value="baseline and differential"/>
</dbReference>
<dbReference type="GO" id="GO:0005829">
    <property type="term" value="C:cytosol"/>
    <property type="evidence" value="ECO:0007005"/>
    <property type="project" value="TAIR"/>
</dbReference>
<dbReference type="GO" id="GO:0005783">
    <property type="term" value="C:endoplasmic reticulum"/>
    <property type="evidence" value="ECO:0000314"/>
    <property type="project" value="TAIR"/>
</dbReference>
<dbReference type="GO" id="GO:0005634">
    <property type="term" value="C:nucleus"/>
    <property type="evidence" value="ECO:0000314"/>
    <property type="project" value="TAIR"/>
</dbReference>
<dbReference type="GO" id="GO:0005886">
    <property type="term" value="C:plasma membrane"/>
    <property type="evidence" value="ECO:0000314"/>
    <property type="project" value="TAIR"/>
</dbReference>
<dbReference type="GO" id="GO:0000502">
    <property type="term" value="C:proteasome complex"/>
    <property type="evidence" value="ECO:0007669"/>
    <property type="project" value="UniProtKB-KW"/>
</dbReference>
<dbReference type="GO" id="GO:0004866">
    <property type="term" value="F:endopeptidase inhibitor activity"/>
    <property type="evidence" value="ECO:0007669"/>
    <property type="project" value="InterPro"/>
</dbReference>
<dbReference type="GO" id="GO:0070628">
    <property type="term" value="F:proteasome binding"/>
    <property type="evidence" value="ECO:0007669"/>
    <property type="project" value="InterPro"/>
</dbReference>
<dbReference type="GO" id="GO:0071365">
    <property type="term" value="P:cellular response to auxin stimulus"/>
    <property type="evidence" value="ECO:0000315"/>
    <property type="project" value="TAIR"/>
</dbReference>
<dbReference type="GO" id="GO:1901799">
    <property type="term" value="P:negative regulation of proteasomal protein catabolic process"/>
    <property type="evidence" value="ECO:0000314"/>
    <property type="project" value="TAIR"/>
</dbReference>
<dbReference type="GO" id="GO:0043161">
    <property type="term" value="P:proteasome-mediated ubiquitin-dependent protein catabolic process"/>
    <property type="evidence" value="ECO:0007669"/>
    <property type="project" value="InterPro"/>
</dbReference>
<dbReference type="FunFam" id="3.40.1000.30:FF:000005">
    <property type="entry name" value="Probable proteasome inhibitor"/>
    <property type="match status" value="1"/>
</dbReference>
<dbReference type="Gene3D" id="3.40.1000.30">
    <property type="match status" value="1"/>
</dbReference>
<dbReference type="InterPro" id="IPR045128">
    <property type="entry name" value="PI31-like"/>
</dbReference>
<dbReference type="InterPro" id="IPR021625">
    <property type="entry name" value="PI31_Prot_N"/>
</dbReference>
<dbReference type="PANTHER" id="PTHR13266">
    <property type="entry name" value="PROTEASOME INHIBITOR"/>
    <property type="match status" value="1"/>
</dbReference>
<dbReference type="PANTHER" id="PTHR13266:SF1">
    <property type="entry name" value="PROTEASOME INHIBITOR PI31 SUBUNIT"/>
    <property type="match status" value="1"/>
</dbReference>
<dbReference type="Pfam" id="PF11566">
    <property type="entry name" value="PI31_Prot_N"/>
    <property type="match status" value="1"/>
</dbReference>
<name>PSMF1_ARATH</name>
<reference key="1">
    <citation type="journal article" date="2000" name="Nature">
        <title>Sequence and analysis of chromosome 3 of the plant Arabidopsis thaliana.</title>
        <authorList>
            <person name="Salanoubat M."/>
            <person name="Lemcke K."/>
            <person name="Rieger M."/>
            <person name="Ansorge W."/>
            <person name="Unseld M."/>
            <person name="Fartmann B."/>
            <person name="Valle G."/>
            <person name="Bloecker H."/>
            <person name="Perez-Alonso M."/>
            <person name="Obermaier B."/>
            <person name="Delseny M."/>
            <person name="Boutry M."/>
            <person name="Grivell L.A."/>
            <person name="Mache R."/>
            <person name="Puigdomenech P."/>
            <person name="De Simone V."/>
            <person name="Choisne N."/>
            <person name="Artiguenave F."/>
            <person name="Robert C."/>
            <person name="Brottier P."/>
            <person name="Wincker P."/>
            <person name="Cattolico L."/>
            <person name="Weissenbach J."/>
            <person name="Saurin W."/>
            <person name="Quetier F."/>
            <person name="Schaefer M."/>
            <person name="Mueller-Auer S."/>
            <person name="Gabel C."/>
            <person name="Fuchs M."/>
            <person name="Benes V."/>
            <person name="Wurmbach E."/>
            <person name="Drzonek H."/>
            <person name="Erfle H."/>
            <person name="Jordan N."/>
            <person name="Bangert S."/>
            <person name="Wiedelmann R."/>
            <person name="Kranz H."/>
            <person name="Voss H."/>
            <person name="Holland R."/>
            <person name="Brandt P."/>
            <person name="Nyakatura G."/>
            <person name="Vezzi A."/>
            <person name="D'Angelo M."/>
            <person name="Pallavicini A."/>
            <person name="Toppo S."/>
            <person name="Simionati B."/>
            <person name="Conrad A."/>
            <person name="Hornischer K."/>
            <person name="Kauer G."/>
            <person name="Loehnert T.-H."/>
            <person name="Nordsiek G."/>
            <person name="Reichelt J."/>
            <person name="Scharfe M."/>
            <person name="Schoen O."/>
            <person name="Bargues M."/>
            <person name="Terol J."/>
            <person name="Climent J."/>
            <person name="Navarro P."/>
            <person name="Collado C."/>
            <person name="Perez-Perez A."/>
            <person name="Ottenwaelder B."/>
            <person name="Duchemin D."/>
            <person name="Cooke R."/>
            <person name="Laudie M."/>
            <person name="Berger-Llauro C."/>
            <person name="Purnelle B."/>
            <person name="Masuy D."/>
            <person name="de Haan M."/>
            <person name="Maarse A.C."/>
            <person name="Alcaraz J.-P."/>
            <person name="Cottet A."/>
            <person name="Casacuberta E."/>
            <person name="Monfort A."/>
            <person name="Argiriou A."/>
            <person name="Flores M."/>
            <person name="Liguori R."/>
            <person name="Vitale D."/>
            <person name="Mannhaupt G."/>
            <person name="Haase D."/>
            <person name="Schoof H."/>
            <person name="Rudd S."/>
            <person name="Zaccaria P."/>
            <person name="Mewes H.-W."/>
            <person name="Mayer K.F.X."/>
            <person name="Kaul S."/>
            <person name="Town C.D."/>
            <person name="Koo H.L."/>
            <person name="Tallon L.J."/>
            <person name="Jenkins J."/>
            <person name="Rooney T."/>
            <person name="Rizzo M."/>
            <person name="Walts A."/>
            <person name="Utterback T."/>
            <person name="Fujii C.Y."/>
            <person name="Shea T.P."/>
            <person name="Creasy T.H."/>
            <person name="Haas B."/>
            <person name="Maiti R."/>
            <person name="Wu D."/>
            <person name="Peterson J."/>
            <person name="Van Aken S."/>
            <person name="Pai G."/>
            <person name="Militscher J."/>
            <person name="Sellers P."/>
            <person name="Gill J.E."/>
            <person name="Feldblyum T.V."/>
            <person name="Preuss D."/>
            <person name="Lin X."/>
            <person name="Nierman W.C."/>
            <person name="Salzberg S.L."/>
            <person name="White O."/>
            <person name="Venter J.C."/>
            <person name="Fraser C.M."/>
            <person name="Kaneko T."/>
            <person name="Nakamura Y."/>
            <person name="Sato S."/>
            <person name="Kato T."/>
            <person name="Asamizu E."/>
            <person name="Sasamoto S."/>
            <person name="Kimura T."/>
            <person name="Idesawa K."/>
            <person name="Kawashima K."/>
            <person name="Kishida Y."/>
            <person name="Kiyokawa C."/>
            <person name="Kohara M."/>
            <person name="Matsumoto M."/>
            <person name="Matsuno A."/>
            <person name="Muraki A."/>
            <person name="Nakayama S."/>
            <person name="Nakazaki N."/>
            <person name="Shinpo S."/>
            <person name="Takeuchi C."/>
            <person name="Wada T."/>
            <person name="Watanabe A."/>
            <person name="Yamada M."/>
            <person name="Yasuda M."/>
            <person name="Tabata S."/>
        </authorList>
    </citation>
    <scope>NUCLEOTIDE SEQUENCE [LARGE SCALE GENOMIC DNA]</scope>
    <source>
        <strain>cv. Columbia</strain>
    </source>
</reference>
<reference key="2">
    <citation type="journal article" date="2017" name="Plant J.">
        <title>Araport11: a complete reannotation of the Arabidopsis thaliana reference genome.</title>
        <authorList>
            <person name="Cheng C.Y."/>
            <person name="Krishnakumar V."/>
            <person name="Chan A.P."/>
            <person name="Thibaud-Nissen F."/>
            <person name="Schobel S."/>
            <person name="Town C.D."/>
        </authorList>
    </citation>
    <scope>GENOME REANNOTATION</scope>
    <source>
        <strain>cv. Columbia</strain>
    </source>
</reference>
<reference key="3">
    <citation type="journal article" date="2003" name="Science">
        <title>Empirical analysis of transcriptional activity in the Arabidopsis genome.</title>
        <authorList>
            <person name="Yamada K."/>
            <person name="Lim J."/>
            <person name="Dale J.M."/>
            <person name="Chen H."/>
            <person name="Shinn P."/>
            <person name="Palm C.J."/>
            <person name="Southwick A.M."/>
            <person name="Wu H.C."/>
            <person name="Kim C.J."/>
            <person name="Nguyen M."/>
            <person name="Pham P.K."/>
            <person name="Cheuk R.F."/>
            <person name="Karlin-Newmann G."/>
            <person name="Liu S.X."/>
            <person name="Lam B."/>
            <person name="Sakano H."/>
            <person name="Wu T."/>
            <person name="Yu G."/>
            <person name="Miranda M."/>
            <person name="Quach H.L."/>
            <person name="Tripp M."/>
            <person name="Chang C.H."/>
            <person name="Lee J.M."/>
            <person name="Toriumi M.J."/>
            <person name="Chan M.M."/>
            <person name="Tang C.C."/>
            <person name="Onodera C.S."/>
            <person name="Deng J.M."/>
            <person name="Akiyama K."/>
            <person name="Ansari Y."/>
            <person name="Arakawa T."/>
            <person name="Banh J."/>
            <person name="Banno F."/>
            <person name="Bowser L."/>
            <person name="Brooks S.Y."/>
            <person name="Carninci P."/>
            <person name="Chao Q."/>
            <person name="Choy N."/>
            <person name="Enju A."/>
            <person name="Goldsmith A.D."/>
            <person name="Gurjal M."/>
            <person name="Hansen N.F."/>
            <person name="Hayashizaki Y."/>
            <person name="Johnson-Hopson C."/>
            <person name="Hsuan V.W."/>
            <person name="Iida K."/>
            <person name="Karnes M."/>
            <person name="Khan S."/>
            <person name="Koesema E."/>
            <person name="Ishida J."/>
            <person name="Jiang P.X."/>
            <person name="Jones T."/>
            <person name="Kawai J."/>
            <person name="Kamiya A."/>
            <person name="Meyers C."/>
            <person name="Nakajima M."/>
            <person name="Narusaka M."/>
            <person name="Seki M."/>
            <person name="Sakurai T."/>
            <person name="Satou M."/>
            <person name="Tamse R."/>
            <person name="Vaysberg M."/>
            <person name="Wallender E.K."/>
            <person name="Wong C."/>
            <person name="Yamamura Y."/>
            <person name="Yuan S."/>
            <person name="Shinozaki K."/>
            <person name="Davis R.W."/>
            <person name="Theologis A."/>
            <person name="Ecker J.R."/>
        </authorList>
    </citation>
    <scope>NUCLEOTIDE SEQUENCE [LARGE SCALE MRNA]</scope>
    <source>
        <strain>cv. Columbia</strain>
    </source>
</reference>
<reference key="4">
    <citation type="journal article" date="2012" name="Mol. Cell. Proteomics">
        <title>Comparative large-scale characterisation of plant vs. mammal proteins reveals similar and idiosyncratic N-alpha acetylation features.</title>
        <authorList>
            <person name="Bienvenut W.V."/>
            <person name="Sumpton D."/>
            <person name="Martinez A."/>
            <person name="Lilla S."/>
            <person name="Espagne C."/>
            <person name="Meinnel T."/>
            <person name="Giglione C."/>
        </authorList>
    </citation>
    <scope>ACETYLATION [LARGE SCALE ANALYSIS] AT ALA-2</scope>
    <scope>CLEAVAGE OF INITIATOR METHIONINE [LARGE SCALE ANALYSIS]</scope>
    <scope>IDENTIFICATION BY MASS SPECTROMETRY [LARGE SCALE ANALYSIS]</scope>
</reference>